<reference key="1">
    <citation type="submission" date="2009-04" db="EMBL/GenBank/DDBJ databases">
        <title>Genome sequence of Bacillus anthracis A0248.</title>
        <authorList>
            <person name="Dodson R.J."/>
            <person name="Munk A.C."/>
            <person name="Bruce D."/>
            <person name="Detter C."/>
            <person name="Tapia R."/>
            <person name="Sutton G."/>
            <person name="Sims D."/>
            <person name="Brettin T."/>
        </authorList>
    </citation>
    <scope>NUCLEOTIDE SEQUENCE [LARGE SCALE GENOMIC DNA]</scope>
    <source>
        <strain>A0248</strain>
    </source>
</reference>
<dbReference type="EC" id="1.20.4.4" evidence="1"/>
<dbReference type="EMBL" id="CP001598">
    <property type="protein sequence ID" value="ACQ47058.1"/>
    <property type="molecule type" value="Genomic_DNA"/>
</dbReference>
<dbReference type="RefSeq" id="WP_000428348.1">
    <property type="nucleotide sequence ID" value="NC_012659.1"/>
</dbReference>
<dbReference type="SMR" id="C3P101"/>
<dbReference type="GeneID" id="45022981"/>
<dbReference type="KEGG" id="bai:BAA_3245"/>
<dbReference type="HOGENOM" id="CLU_071415_3_2_9"/>
<dbReference type="GO" id="GO:0005737">
    <property type="term" value="C:cytoplasm"/>
    <property type="evidence" value="ECO:0007669"/>
    <property type="project" value="UniProtKB-SubCell"/>
</dbReference>
<dbReference type="GO" id="GO:0030612">
    <property type="term" value="F:arsenate reductase (thioredoxin) activity"/>
    <property type="evidence" value="ECO:0007669"/>
    <property type="project" value="UniProtKB-UniRule"/>
</dbReference>
<dbReference type="GO" id="GO:0004725">
    <property type="term" value="F:protein tyrosine phosphatase activity"/>
    <property type="evidence" value="ECO:0007669"/>
    <property type="project" value="InterPro"/>
</dbReference>
<dbReference type="GO" id="GO:0046685">
    <property type="term" value="P:response to arsenic-containing substance"/>
    <property type="evidence" value="ECO:0007669"/>
    <property type="project" value="UniProtKB-KW"/>
</dbReference>
<dbReference type="CDD" id="cd16345">
    <property type="entry name" value="LMWP_ArsC"/>
    <property type="match status" value="1"/>
</dbReference>
<dbReference type="FunFam" id="3.40.50.2300:FF:000237">
    <property type="entry name" value="Arsenate reductase"/>
    <property type="match status" value="1"/>
</dbReference>
<dbReference type="Gene3D" id="3.40.50.2300">
    <property type="match status" value="1"/>
</dbReference>
<dbReference type="HAMAP" id="MF_01624">
    <property type="entry name" value="Arsenate_reduct"/>
    <property type="match status" value="1"/>
</dbReference>
<dbReference type="InterPro" id="IPR014064">
    <property type="entry name" value="Arsenate_reductase_ArsC"/>
</dbReference>
<dbReference type="InterPro" id="IPR023485">
    <property type="entry name" value="Ptyr_pPase"/>
</dbReference>
<dbReference type="InterPro" id="IPR036196">
    <property type="entry name" value="Ptyr_pPase_sf"/>
</dbReference>
<dbReference type="NCBIfam" id="TIGR02691">
    <property type="entry name" value="arsC_pI258_fam"/>
    <property type="match status" value="1"/>
</dbReference>
<dbReference type="NCBIfam" id="NF010053">
    <property type="entry name" value="PRK13530.1"/>
    <property type="match status" value="1"/>
</dbReference>
<dbReference type="PANTHER" id="PTHR43428">
    <property type="entry name" value="ARSENATE REDUCTASE"/>
    <property type="match status" value="1"/>
</dbReference>
<dbReference type="PANTHER" id="PTHR43428:SF1">
    <property type="entry name" value="ARSENATE REDUCTASE"/>
    <property type="match status" value="1"/>
</dbReference>
<dbReference type="Pfam" id="PF01451">
    <property type="entry name" value="LMWPc"/>
    <property type="match status" value="1"/>
</dbReference>
<dbReference type="SMART" id="SM00226">
    <property type="entry name" value="LMWPc"/>
    <property type="match status" value="1"/>
</dbReference>
<dbReference type="SUPFAM" id="SSF52788">
    <property type="entry name" value="Phosphotyrosine protein phosphatases I"/>
    <property type="match status" value="1"/>
</dbReference>
<name>ARSC_BACAA</name>
<keyword id="KW-0059">Arsenical resistance</keyword>
<keyword id="KW-0963">Cytoplasm</keyword>
<keyword id="KW-1015">Disulfide bond</keyword>
<keyword id="KW-0560">Oxidoreductase</keyword>
<keyword id="KW-0676">Redox-active center</keyword>
<sequence length="134" mass="15066">MENKKTIYFLCTGNSCRSQMAEAWGKQYLGDKWNVYSAGIEAHGVNPNAIKAMNEVNIDITNQTSDIIDANILNRADLVVTLCSHADAVCPSTPPHVNRVHWGFDDPAGKEWPEFQRVRDEIGERIKRFSETGE</sequence>
<comment type="function">
    <text evidence="1">Catalyzes the reduction of arsenate [As(V)] to arsenite [As(III)].</text>
</comment>
<comment type="catalytic activity">
    <reaction evidence="1">
        <text>arsenate + [thioredoxin]-dithiol + H(+) = arsenite + [thioredoxin]-disulfide + H2O</text>
        <dbReference type="Rhea" id="RHEA:43848"/>
        <dbReference type="Rhea" id="RHEA-COMP:10698"/>
        <dbReference type="Rhea" id="RHEA-COMP:10700"/>
        <dbReference type="ChEBI" id="CHEBI:15377"/>
        <dbReference type="ChEBI" id="CHEBI:15378"/>
        <dbReference type="ChEBI" id="CHEBI:29242"/>
        <dbReference type="ChEBI" id="CHEBI:29950"/>
        <dbReference type="ChEBI" id="CHEBI:48597"/>
        <dbReference type="ChEBI" id="CHEBI:50058"/>
        <dbReference type="EC" id="1.20.4.4"/>
    </reaction>
</comment>
<comment type="subcellular location">
    <subcellularLocation>
        <location evidence="1">Cytoplasm</location>
    </subcellularLocation>
</comment>
<comment type="similarity">
    <text evidence="1">Belongs to the low molecular weight phosphotyrosine protein phosphatase family. Thioredoxin-coupled ArsC subfamily.</text>
</comment>
<feature type="chain" id="PRO_1000186113" description="Arsenate reductase">
    <location>
        <begin position="1"/>
        <end position="134"/>
    </location>
</feature>
<feature type="active site" description="Nucleophile" evidence="1">
    <location>
        <position position="11"/>
    </location>
</feature>
<feature type="active site" description="Nucleophile" evidence="1">
    <location>
        <position position="83"/>
    </location>
</feature>
<feature type="active site" description="Nucleophile" evidence="1">
    <location>
        <position position="90"/>
    </location>
</feature>
<feature type="disulfide bond" description="Redox-active; alternate" evidence="1">
    <location>
        <begin position="11"/>
        <end position="83"/>
    </location>
</feature>
<feature type="disulfide bond" description="Redox-active; alternate" evidence="1">
    <location>
        <begin position="83"/>
        <end position="90"/>
    </location>
</feature>
<gene>
    <name evidence="1" type="primary">arsC</name>
    <name type="ordered locus">BAA_3245</name>
</gene>
<organism>
    <name type="scientific">Bacillus anthracis (strain A0248)</name>
    <dbReference type="NCBI Taxonomy" id="592021"/>
    <lineage>
        <taxon>Bacteria</taxon>
        <taxon>Bacillati</taxon>
        <taxon>Bacillota</taxon>
        <taxon>Bacilli</taxon>
        <taxon>Bacillales</taxon>
        <taxon>Bacillaceae</taxon>
        <taxon>Bacillus</taxon>
        <taxon>Bacillus cereus group</taxon>
    </lineage>
</organism>
<protein>
    <recommendedName>
        <fullName evidence="1">Arsenate reductase</fullName>
        <ecNumber evidence="1">1.20.4.4</ecNumber>
    </recommendedName>
</protein>
<proteinExistence type="inferred from homology"/>
<accession>C3P101</accession>
<evidence type="ECO:0000255" key="1">
    <source>
        <dbReference type="HAMAP-Rule" id="MF_01624"/>
    </source>
</evidence>